<gene>
    <name evidence="1" type="primary">glmM</name>
    <name type="ordered locus">alr1900</name>
</gene>
<name>GLMM_NOSS1</name>
<proteinExistence type="inferred from homology"/>
<reference key="1">
    <citation type="journal article" date="2001" name="DNA Res.">
        <title>Complete genomic sequence of the filamentous nitrogen-fixing cyanobacterium Anabaena sp. strain PCC 7120.</title>
        <authorList>
            <person name="Kaneko T."/>
            <person name="Nakamura Y."/>
            <person name="Wolk C.P."/>
            <person name="Kuritz T."/>
            <person name="Sasamoto S."/>
            <person name="Watanabe A."/>
            <person name="Iriguchi M."/>
            <person name="Ishikawa A."/>
            <person name="Kawashima K."/>
            <person name="Kimura T."/>
            <person name="Kishida Y."/>
            <person name="Kohara M."/>
            <person name="Matsumoto M."/>
            <person name="Matsuno A."/>
            <person name="Muraki A."/>
            <person name="Nakazaki N."/>
            <person name="Shimpo S."/>
            <person name="Sugimoto M."/>
            <person name="Takazawa M."/>
            <person name="Yamada M."/>
            <person name="Yasuda M."/>
            <person name="Tabata S."/>
        </authorList>
    </citation>
    <scope>NUCLEOTIDE SEQUENCE [LARGE SCALE GENOMIC DNA]</scope>
    <source>
        <strain>PCC 7120 / SAG 25.82 / UTEX 2576</strain>
    </source>
</reference>
<evidence type="ECO:0000255" key="1">
    <source>
        <dbReference type="HAMAP-Rule" id="MF_01554"/>
    </source>
</evidence>
<evidence type="ECO:0000305" key="2"/>
<protein>
    <recommendedName>
        <fullName evidence="1">Phosphoglucosamine mutase</fullName>
        <ecNumber evidence="1">5.4.2.10</ecNumber>
    </recommendedName>
</protein>
<keyword id="KW-0413">Isomerase</keyword>
<keyword id="KW-0460">Magnesium</keyword>
<keyword id="KW-0479">Metal-binding</keyword>
<keyword id="KW-0597">Phosphoprotein</keyword>
<keyword id="KW-1185">Reference proteome</keyword>
<dbReference type="EC" id="5.4.2.10" evidence="1"/>
<dbReference type="EMBL" id="BA000019">
    <property type="protein sequence ID" value="BAB73599.1"/>
    <property type="status" value="ALT_INIT"/>
    <property type="molecule type" value="Genomic_DNA"/>
</dbReference>
<dbReference type="PIR" id="AF2043">
    <property type="entry name" value="AF2043"/>
</dbReference>
<dbReference type="RefSeq" id="WP_044521120.1">
    <property type="nucleotide sequence ID" value="NZ_RSCN01000017.1"/>
</dbReference>
<dbReference type="SMR" id="Q8YVS4"/>
<dbReference type="STRING" id="103690.gene:10493919"/>
<dbReference type="KEGG" id="ana:alr1900"/>
<dbReference type="eggNOG" id="COG1109">
    <property type="taxonomic scope" value="Bacteria"/>
</dbReference>
<dbReference type="OrthoDB" id="9806956at2"/>
<dbReference type="Proteomes" id="UP000002483">
    <property type="component" value="Chromosome"/>
</dbReference>
<dbReference type="GO" id="GO:0005829">
    <property type="term" value="C:cytosol"/>
    <property type="evidence" value="ECO:0007669"/>
    <property type="project" value="TreeGrafter"/>
</dbReference>
<dbReference type="GO" id="GO:0000287">
    <property type="term" value="F:magnesium ion binding"/>
    <property type="evidence" value="ECO:0007669"/>
    <property type="project" value="UniProtKB-UniRule"/>
</dbReference>
<dbReference type="GO" id="GO:0008966">
    <property type="term" value="F:phosphoglucosamine mutase activity"/>
    <property type="evidence" value="ECO:0007669"/>
    <property type="project" value="UniProtKB-UniRule"/>
</dbReference>
<dbReference type="GO" id="GO:0004615">
    <property type="term" value="F:phosphomannomutase activity"/>
    <property type="evidence" value="ECO:0007669"/>
    <property type="project" value="TreeGrafter"/>
</dbReference>
<dbReference type="GO" id="GO:0005975">
    <property type="term" value="P:carbohydrate metabolic process"/>
    <property type="evidence" value="ECO:0007669"/>
    <property type="project" value="InterPro"/>
</dbReference>
<dbReference type="GO" id="GO:0009252">
    <property type="term" value="P:peptidoglycan biosynthetic process"/>
    <property type="evidence" value="ECO:0007669"/>
    <property type="project" value="TreeGrafter"/>
</dbReference>
<dbReference type="GO" id="GO:0006048">
    <property type="term" value="P:UDP-N-acetylglucosamine biosynthetic process"/>
    <property type="evidence" value="ECO:0007669"/>
    <property type="project" value="TreeGrafter"/>
</dbReference>
<dbReference type="CDD" id="cd05802">
    <property type="entry name" value="GlmM"/>
    <property type="match status" value="1"/>
</dbReference>
<dbReference type="FunFam" id="3.30.310.50:FF:000001">
    <property type="entry name" value="Phosphoglucosamine mutase"/>
    <property type="match status" value="1"/>
</dbReference>
<dbReference type="FunFam" id="3.40.120.10:FF:000001">
    <property type="entry name" value="Phosphoglucosamine mutase"/>
    <property type="match status" value="1"/>
</dbReference>
<dbReference type="FunFam" id="3.40.120.10:FF:000002">
    <property type="entry name" value="Phosphoglucosamine mutase"/>
    <property type="match status" value="1"/>
</dbReference>
<dbReference type="FunFam" id="3.40.120.10:FF:000003">
    <property type="entry name" value="Phosphoglucosamine mutase"/>
    <property type="match status" value="1"/>
</dbReference>
<dbReference type="Gene3D" id="3.40.120.10">
    <property type="entry name" value="Alpha-D-Glucose-1,6-Bisphosphate, subunit A, domain 3"/>
    <property type="match status" value="3"/>
</dbReference>
<dbReference type="Gene3D" id="3.30.310.50">
    <property type="entry name" value="Alpha-D-phosphohexomutase, C-terminal domain"/>
    <property type="match status" value="1"/>
</dbReference>
<dbReference type="HAMAP" id="MF_01554_B">
    <property type="entry name" value="GlmM_B"/>
    <property type="match status" value="1"/>
</dbReference>
<dbReference type="InterPro" id="IPR005844">
    <property type="entry name" value="A-D-PHexomutase_a/b/a-I"/>
</dbReference>
<dbReference type="InterPro" id="IPR016055">
    <property type="entry name" value="A-D-PHexomutase_a/b/a-I/II/III"/>
</dbReference>
<dbReference type="InterPro" id="IPR005845">
    <property type="entry name" value="A-D-PHexomutase_a/b/a-II"/>
</dbReference>
<dbReference type="InterPro" id="IPR005846">
    <property type="entry name" value="A-D-PHexomutase_a/b/a-III"/>
</dbReference>
<dbReference type="InterPro" id="IPR005843">
    <property type="entry name" value="A-D-PHexomutase_C"/>
</dbReference>
<dbReference type="InterPro" id="IPR036900">
    <property type="entry name" value="A-D-PHexomutase_C_sf"/>
</dbReference>
<dbReference type="InterPro" id="IPR016066">
    <property type="entry name" value="A-D-PHexomutase_CS"/>
</dbReference>
<dbReference type="InterPro" id="IPR005841">
    <property type="entry name" value="Alpha-D-phosphohexomutase_SF"/>
</dbReference>
<dbReference type="InterPro" id="IPR006352">
    <property type="entry name" value="GlmM_bact"/>
</dbReference>
<dbReference type="InterPro" id="IPR050060">
    <property type="entry name" value="Phosphoglucosamine_mutase"/>
</dbReference>
<dbReference type="NCBIfam" id="TIGR01455">
    <property type="entry name" value="glmM"/>
    <property type="match status" value="1"/>
</dbReference>
<dbReference type="PANTHER" id="PTHR42946:SF1">
    <property type="entry name" value="PHOSPHOGLUCOMUTASE (ALPHA-D-GLUCOSE-1,6-BISPHOSPHATE-DEPENDENT)"/>
    <property type="match status" value="1"/>
</dbReference>
<dbReference type="PANTHER" id="PTHR42946">
    <property type="entry name" value="PHOSPHOHEXOSE MUTASE"/>
    <property type="match status" value="1"/>
</dbReference>
<dbReference type="Pfam" id="PF02878">
    <property type="entry name" value="PGM_PMM_I"/>
    <property type="match status" value="1"/>
</dbReference>
<dbReference type="Pfam" id="PF02879">
    <property type="entry name" value="PGM_PMM_II"/>
    <property type="match status" value="1"/>
</dbReference>
<dbReference type="Pfam" id="PF02880">
    <property type="entry name" value="PGM_PMM_III"/>
    <property type="match status" value="1"/>
</dbReference>
<dbReference type="Pfam" id="PF00408">
    <property type="entry name" value="PGM_PMM_IV"/>
    <property type="match status" value="1"/>
</dbReference>
<dbReference type="PRINTS" id="PR00509">
    <property type="entry name" value="PGMPMM"/>
</dbReference>
<dbReference type="SUPFAM" id="SSF55957">
    <property type="entry name" value="Phosphoglucomutase, C-terminal domain"/>
    <property type="match status" value="1"/>
</dbReference>
<dbReference type="SUPFAM" id="SSF53738">
    <property type="entry name" value="Phosphoglucomutase, first 3 domains"/>
    <property type="match status" value="3"/>
</dbReference>
<dbReference type="PROSITE" id="PS00710">
    <property type="entry name" value="PGM_PMM"/>
    <property type="match status" value="1"/>
</dbReference>
<comment type="function">
    <text evidence="1">Catalyzes the conversion of glucosamine-6-phosphate to glucosamine-1-phosphate.</text>
</comment>
<comment type="catalytic activity">
    <reaction evidence="1">
        <text>alpha-D-glucosamine 1-phosphate = D-glucosamine 6-phosphate</text>
        <dbReference type="Rhea" id="RHEA:23424"/>
        <dbReference type="ChEBI" id="CHEBI:58516"/>
        <dbReference type="ChEBI" id="CHEBI:58725"/>
        <dbReference type="EC" id="5.4.2.10"/>
    </reaction>
</comment>
<comment type="cofactor">
    <cofactor evidence="1">
        <name>Mg(2+)</name>
        <dbReference type="ChEBI" id="CHEBI:18420"/>
    </cofactor>
    <text evidence="1">Binds 1 Mg(2+) ion per subunit.</text>
</comment>
<comment type="PTM">
    <text evidence="1">Activated by phosphorylation.</text>
</comment>
<comment type="similarity">
    <text evidence="1">Belongs to the phosphohexose mutase family.</text>
</comment>
<comment type="sequence caution" evidence="2">
    <conflict type="erroneous initiation">
        <sequence resource="EMBL-CDS" id="BAB73599"/>
    </conflict>
</comment>
<sequence>MVSSITRIQNYVIDGAATSNGLETVLESNFAPSLISLPATPLFGTDGIRGKVGELLSAPLALQIGFWAGVVLRNHADQLGPVILGQDSRNSSDMLAMALSAGLTAAGLEVWYLGLCPTPCVAYLTSMSEAIGGVMISASHNPPEDNGIKIFGANGGKLSQALQAEIEKGLRGNLPITSNVSNCGRHYSRWELVKNYGEALKRPWQNKVNLQGMKVVLDLAWGAAVGLAPSVFAEMGAEVISLHNAADGDRINVNCGSTHLEMLQAAVQEHNADLGFAFDGDADRVLAVDPTGRPVNGDYILYLWGLYLKQQNQLPDNLIVSTVMANLGFEKAWQQQGGKLIRTAVGDQYVQAEMIKTGAMLGGEQSGHILCSHYGMTGDGLLTALHLASLVKQSGVSLAELIDQSFQTYPQLLRNVRVVDRDRRLSWQNCTPVQQAIALAEKAMGDTGRILVRASGTEPVIRVMVEAANAELANYWTNELVAQVQQHLAP</sequence>
<accession>Q8YVS4</accession>
<feature type="chain" id="PRO_0000147836" description="Phosphoglucosamine mutase">
    <location>
        <begin position="1"/>
        <end position="490"/>
    </location>
</feature>
<feature type="active site" description="Phosphoserine intermediate" evidence="1">
    <location>
        <position position="139"/>
    </location>
</feature>
<feature type="binding site" description="via phosphate group" evidence="1">
    <location>
        <position position="139"/>
    </location>
    <ligand>
        <name>Mg(2+)</name>
        <dbReference type="ChEBI" id="CHEBI:18420"/>
    </ligand>
</feature>
<feature type="binding site" evidence="1">
    <location>
        <position position="279"/>
    </location>
    <ligand>
        <name>Mg(2+)</name>
        <dbReference type="ChEBI" id="CHEBI:18420"/>
    </ligand>
</feature>
<feature type="binding site" evidence="1">
    <location>
        <position position="281"/>
    </location>
    <ligand>
        <name>Mg(2+)</name>
        <dbReference type="ChEBI" id="CHEBI:18420"/>
    </ligand>
</feature>
<feature type="binding site" evidence="1">
    <location>
        <position position="283"/>
    </location>
    <ligand>
        <name>Mg(2+)</name>
        <dbReference type="ChEBI" id="CHEBI:18420"/>
    </ligand>
</feature>
<feature type="modified residue" description="Phosphoserine" evidence="1">
    <location>
        <position position="139"/>
    </location>
</feature>
<organism>
    <name type="scientific">Nostoc sp. (strain PCC 7120 / SAG 25.82 / UTEX 2576)</name>
    <dbReference type="NCBI Taxonomy" id="103690"/>
    <lineage>
        <taxon>Bacteria</taxon>
        <taxon>Bacillati</taxon>
        <taxon>Cyanobacteriota</taxon>
        <taxon>Cyanophyceae</taxon>
        <taxon>Nostocales</taxon>
        <taxon>Nostocaceae</taxon>
        <taxon>Nostoc</taxon>
    </lineage>
</organism>